<reference key="1">
    <citation type="journal article" date="2005" name="Nat. Biotechnol.">
        <title>Genome sequence of the chlorinated compound-respiring bacterium Dehalococcoides species strain CBDB1.</title>
        <authorList>
            <person name="Kube M."/>
            <person name="Beck A."/>
            <person name="Zinder S.H."/>
            <person name="Kuhl H."/>
            <person name="Reinhardt R."/>
            <person name="Adrian L."/>
        </authorList>
    </citation>
    <scope>NUCLEOTIDE SEQUENCE [LARGE SCALE GENOMIC DNA]</scope>
    <source>
        <strain>CBDB1</strain>
    </source>
</reference>
<feature type="chain" id="PRO_0000376193" description="NADH-quinone oxidoreductase subunit B">
    <location>
        <begin position="1"/>
        <end position="200"/>
    </location>
</feature>
<feature type="binding site" evidence="1">
    <location>
        <position position="78"/>
    </location>
    <ligand>
        <name>[4Fe-4S] cluster</name>
        <dbReference type="ChEBI" id="CHEBI:49883"/>
    </ligand>
</feature>
<feature type="binding site" evidence="1">
    <location>
        <position position="79"/>
    </location>
    <ligand>
        <name>[4Fe-4S] cluster</name>
        <dbReference type="ChEBI" id="CHEBI:49883"/>
    </ligand>
</feature>
<feature type="binding site" evidence="1">
    <location>
        <position position="144"/>
    </location>
    <ligand>
        <name>[4Fe-4S] cluster</name>
        <dbReference type="ChEBI" id="CHEBI:49883"/>
    </ligand>
</feature>
<feature type="binding site" evidence="1">
    <location>
        <position position="174"/>
    </location>
    <ligand>
        <name>[4Fe-4S] cluster</name>
        <dbReference type="ChEBI" id="CHEBI:49883"/>
    </ligand>
</feature>
<protein>
    <recommendedName>
        <fullName evidence="1">NADH-quinone oxidoreductase subunit B</fullName>
        <ecNumber evidence="1">7.1.1.-</ecNumber>
    </recommendedName>
    <alternativeName>
        <fullName evidence="1">NADH dehydrogenase I subunit B</fullName>
    </alternativeName>
    <alternativeName>
        <fullName evidence="1">NDH-1 subunit B</fullName>
    </alternativeName>
</protein>
<name>NUOB_DEHMC</name>
<keyword id="KW-0004">4Fe-4S</keyword>
<keyword id="KW-1003">Cell membrane</keyword>
<keyword id="KW-0408">Iron</keyword>
<keyword id="KW-0411">Iron-sulfur</keyword>
<keyword id="KW-0472">Membrane</keyword>
<keyword id="KW-0479">Metal-binding</keyword>
<keyword id="KW-0520">NAD</keyword>
<keyword id="KW-0874">Quinone</keyword>
<keyword id="KW-1278">Translocase</keyword>
<keyword id="KW-0813">Transport</keyword>
<keyword id="KW-0830">Ubiquinone</keyword>
<sequence length="200" mass="22592">MELNFEKPLSLLTLDEIDQQEGGVIQSFRTGHTSPYPDPADWLNGEEPPPGVFITSVEKVLNWSRHYSLWPVMFGLACCAIEMMCMAASRWDLARFGMDIFRASPRQADLMIVAGTLTWKMAPWLKRIYDQMPEPKWVLAMGACGTSGGLFRDSYSVVPGFNLVVPVDVYVPGCPPRPEALMRAIMDIHEKIDKTRILKR</sequence>
<organism>
    <name type="scientific">Dehalococcoides mccartyi (strain CBDB1)</name>
    <dbReference type="NCBI Taxonomy" id="255470"/>
    <lineage>
        <taxon>Bacteria</taxon>
        <taxon>Bacillati</taxon>
        <taxon>Chloroflexota</taxon>
        <taxon>Dehalococcoidia</taxon>
        <taxon>Dehalococcoidales</taxon>
        <taxon>Dehalococcoidaceae</taxon>
        <taxon>Dehalococcoides</taxon>
    </lineage>
</organism>
<gene>
    <name evidence="1" type="primary">nuoB</name>
    <name type="ordered locus">cbdbA875</name>
</gene>
<proteinExistence type="inferred from homology"/>
<comment type="function">
    <text evidence="1">NDH-1 shuttles electrons from NADH, via FMN and iron-sulfur (Fe-S) centers, to quinones in the respiratory chain. The immediate electron acceptor for the enzyme in this species is believed to be ubiquinone. Couples the redox reaction to proton translocation (for every two electrons transferred, four hydrogen ions are translocated across the cytoplasmic membrane), and thus conserves the redox energy in a proton gradient.</text>
</comment>
<comment type="catalytic activity">
    <reaction evidence="1">
        <text>a quinone + NADH + 5 H(+)(in) = a quinol + NAD(+) + 4 H(+)(out)</text>
        <dbReference type="Rhea" id="RHEA:57888"/>
        <dbReference type="ChEBI" id="CHEBI:15378"/>
        <dbReference type="ChEBI" id="CHEBI:24646"/>
        <dbReference type="ChEBI" id="CHEBI:57540"/>
        <dbReference type="ChEBI" id="CHEBI:57945"/>
        <dbReference type="ChEBI" id="CHEBI:132124"/>
    </reaction>
</comment>
<comment type="cofactor">
    <cofactor evidence="1">
        <name>[4Fe-4S] cluster</name>
        <dbReference type="ChEBI" id="CHEBI:49883"/>
    </cofactor>
    <text evidence="1">Binds 1 [4Fe-4S] cluster.</text>
</comment>
<comment type="subunit">
    <text evidence="1">NDH-1 is composed of 14 different subunits. Subunits NuoB, C, D, E, F, and G constitute the peripheral sector of the complex.</text>
</comment>
<comment type="subcellular location">
    <subcellularLocation>
        <location evidence="1">Cell membrane</location>
        <topology evidence="1">Peripheral membrane protein</topology>
        <orientation evidence="1">Cytoplasmic side</orientation>
    </subcellularLocation>
</comment>
<comment type="similarity">
    <text evidence="1">Belongs to the complex I 20 kDa subunit family.</text>
</comment>
<accession>Q3ZXS0</accession>
<evidence type="ECO:0000255" key="1">
    <source>
        <dbReference type="HAMAP-Rule" id="MF_01356"/>
    </source>
</evidence>
<dbReference type="EC" id="7.1.1.-" evidence="1"/>
<dbReference type="EMBL" id="AJ965256">
    <property type="protein sequence ID" value="CAI83015.1"/>
    <property type="molecule type" value="Genomic_DNA"/>
</dbReference>
<dbReference type="RefSeq" id="WP_011309366.1">
    <property type="nucleotide sequence ID" value="NC_007356.1"/>
</dbReference>
<dbReference type="SMR" id="Q3ZXS0"/>
<dbReference type="KEGG" id="deh:cbdbA875"/>
<dbReference type="HOGENOM" id="CLU_055737_7_3_0"/>
<dbReference type="Proteomes" id="UP000000433">
    <property type="component" value="Chromosome"/>
</dbReference>
<dbReference type="GO" id="GO:0005886">
    <property type="term" value="C:plasma membrane"/>
    <property type="evidence" value="ECO:0007669"/>
    <property type="project" value="UniProtKB-SubCell"/>
</dbReference>
<dbReference type="GO" id="GO:0045271">
    <property type="term" value="C:respiratory chain complex I"/>
    <property type="evidence" value="ECO:0007669"/>
    <property type="project" value="TreeGrafter"/>
</dbReference>
<dbReference type="GO" id="GO:0051539">
    <property type="term" value="F:4 iron, 4 sulfur cluster binding"/>
    <property type="evidence" value="ECO:0007669"/>
    <property type="project" value="UniProtKB-KW"/>
</dbReference>
<dbReference type="GO" id="GO:0005506">
    <property type="term" value="F:iron ion binding"/>
    <property type="evidence" value="ECO:0007669"/>
    <property type="project" value="UniProtKB-UniRule"/>
</dbReference>
<dbReference type="GO" id="GO:0008137">
    <property type="term" value="F:NADH dehydrogenase (ubiquinone) activity"/>
    <property type="evidence" value="ECO:0007669"/>
    <property type="project" value="InterPro"/>
</dbReference>
<dbReference type="GO" id="GO:0050136">
    <property type="term" value="F:NADH:ubiquinone reductase (non-electrogenic) activity"/>
    <property type="evidence" value="ECO:0007669"/>
    <property type="project" value="UniProtKB-UniRule"/>
</dbReference>
<dbReference type="GO" id="GO:0048038">
    <property type="term" value="F:quinone binding"/>
    <property type="evidence" value="ECO:0007669"/>
    <property type="project" value="UniProtKB-KW"/>
</dbReference>
<dbReference type="GO" id="GO:0009060">
    <property type="term" value="P:aerobic respiration"/>
    <property type="evidence" value="ECO:0007669"/>
    <property type="project" value="TreeGrafter"/>
</dbReference>
<dbReference type="GO" id="GO:0015990">
    <property type="term" value="P:electron transport coupled proton transport"/>
    <property type="evidence" value="ECO:0007669"/>
    <property type="project" value="TreeGrafter"/>
</dbReference>
<dbReference type="FunFam" id="3.40.50.12280:FF:000002">
    <property type="entry name" value="NADH-quinone oxidoreductase subunit B"/>
    <property type="match status" value="1"/>
</dbReference>
<dbReference type="Gene3D" id="3.40.50.12280">
    <property type="match status" value="1"/>
</dbReference>
<dbReference type="HAMAP" id="MF_01356">
    <property type="entry name" value="NDH1_NuoB"/>
    <property type="match status" value="1"/>
</dbReference>
<dbReference type="InterPro" id="IPR006137">
    <property type="entry name" value="NADH_UbQ_OxRdtase-like_20kDa"/>
</dbReference>
<dbReference type="InterPro" id="IPR006138">
    <property type="entry name" value="NADH_UQ_OxRdtase_20Kd_su"/>
</dbReference>
<dbReference type="NCBIfam" id="TIGR01957">
    <property type="entry name" value="nuoB_fam"/>
    <property type="match status" value="1"/>
</dbReference>
<dbReference type="NCBIfam" id="NF005012">
    <property type="entry name" value="PRK06411.1"/>
    <property type="match status" value="1"/>
</dbReference>
<dbReference type="PANTHER" id="PTHR11995">
    <property type="entry name" value="NADH DEHYDROGENASE"/>
    <property type="match status" value="1"/>
</dbReference>
<dbReference type="PANTHER" id="PTHR11995:SF14">
    <property type="entry name" value="NADH DEHYDROGENASE [UBIQUINONE] IRON-SULFUR PROTEIN 7, MITOCHONDRIAL"/>
    <property type="match status" value="1"/>
</dbReference>
<dbReference type="Pfam" id="PF01058">
    <property type="entry name" value="Oxidored_q6"/>
    <property type="match status" value="1"/>
</dbReference>
<dbReference type="SUPFAM" id="SSF56770">
    <property type="entry name" value="HydA/Nqo6-like"/>
    <property type="match status" value="1"/>
</dbReference>